<evidence type="ECO:0000255" key="1"/>
<evidence type="ECO:0000256" key="2">
    <source>
        <dbReference type="SAM" id="MobiDB-lite"/>
    </source>
</evidence>
<evidence type="ECO:0000305" key="3"/>
<reference key="1">
    <citation type="journal article" date="1995" name="Science">
        <title>Whole-genome random sequencing and assembly of Haemophilus influenzae Rd.</title>
        <authorList>
            <person name="Fleischmann R.D."/>
            <person name="Adams M.D."/>
            <person name="White O."/>
            <person name="Clayton R.A."/>
            <person name="Kirkness E.F."/>
            <person name="Kerlavage A.R."/>
            <person name="Bult C.J."/>
            <person name="Tomb J.-F."/>
            <person name="Dougherty B.A."/>
            <person name="Merrick J.M."/>
            <person name="McKenney K."/>
            <person name="Sutton G.G."/>
            <person name="FitzHugh W."/>
            <person name="Fields C.A."/>
            <person name="Gocayne J.D."/>
            <person name="Scott J.D."/>
            <person name="Shirley R."/>
            <person name="Liu L.-I."/>
            <person name="Glodek A."/>
            <person name="Kelley J.M."/>
            <person name="Weidman J.F."/>
            <person name="Phillips C.A."/>
            <person name="Spriggs T."/>
            <person name="Hedblom E."/>
            <person name="Cotton M.D."/>
            <person name="Utterback T.R."/>
            <person name="Hanna M.C."/>
            <person name="Nguyen D.T."/>
            <person name="Saudek D.M."/>
            <person name="Brandon R.C."/>
            <person name="Fine L.D."/>
            <person name="Fritchman J.L."/>
            <person name="Fuhrmann J.L."/>
            <person name="Geoghagen N.S.M."/>
            <person name="Gnehm C.L."/>
            <person name="McDonald L.A."/>
            <person name="Small K.V."/>
            <person name="Fraser C.M."/>
            <person name="Smith H.O."/>
            <person name="Venter J.C."/>
        </authorList>
    </citation>
    <scope>NUCLEOTIDE SEQUENCE [LARGE SCALE GENOMIC DNA]</scope>
    <source>
        <strain>ATCC 51907 / DSM 11121 / KW20 / Rd</strain>
    </source>
</reference>
<dbReference type="EC" id="3.4.24.-"/>
<dbReference type="EMBL" id="L42023">
    <property type="protein sequence ID" value="AAC22068.1"/>
    <property type="molecule type" value="Genomic_DNA"/>
</dbReference>
<dbReference type="PIR" id="F64151">
    <property type="entry name" value="F64151"/>
</dbReference>
<dbReference type="RefSeq" id="NP_438571.1">
    <property type="nucleotide sequence ID" value="NC_000907.1"/>
</dbReference>
<dbReference type="SMR" id="P44693"/>
<dbReference type="STRING" id="71421.HI_0409"/>
<dbReference type="MEROPS" id="M23.011"/>
<dbReference type="EnsemblBacteria" id="AAC22068">
    <property type="protein sequence ID" value="AAC22068"/>
    <property type="gene ID" value="HI_0409"/>
</dbReference>
<dbReference type="KEGG" id="hin:HI_0409"/>
<dbReference type="PATRIC" id="fig|71421.8.peg.428"/>
<dbReference type="eggNOG" id="COG0739">
    <property type="taxonomic scope" value="Bacteria"/>
</dbReference>
<dbReference type="HOGENOM" id="CLU_026846_3_2_6"/>
<dbReference type="OrthoDB" id="9805070at2"/>
<dbReference type="PhylomeDB" id="P44693"/>
<dbReference type="BioCyc" id="HINF71421:G1GJ1-424-MONOMER"/>
<dbReference type="Proteomes" id="UP000000579">
    <property type="component" value="Chromosome"/>
</dbReference>
<dbReference type="GO" id="GO:0005886">
    <property type="term" value="C:plasma membrane"/>
    <property type="evidence" value="ECO:0007669"/>
    <property type="project" value="UniProtKB-SubCell"/>
</dbReference>
<dbReference type="GO" id="GO:0046872">
    <property type="term" value="F:metal ion binding"/>
    <property type="evidence" value="ECO:0007669"/>
    <property type="project" value="UniProtKB-KW"/>
</dbReference>
<dbReference type="GO" id="GO:0004222">
    <property type="term" value="F:metalloendopeptidase activity"/>
    <property type="evidence" value="ECO:0000318"/>
    <property type="project" value="GO_Central"/>
</dbReference>
<dbReference type="GO" id="GO:0042834">
    <property type="term" value="F:peptidoglycan binding"/>
    <property type="evidence" value="ECO:0007669"/>
    <property type="project" value="InterPro"/>
</dbReference>
<dbReference type="GO" id="GO:0006508">
    <property type="term" value="P:proteolysis"/>
    <property type="evidence" value="ECO:0007669"/>
    <property type="project" value="UniProtKB-KW"/>
</dbReference>
<dbReference type="CDD" id="cd12797">
    <property type="entry name" value="M23_peptidase"/>
    <property type="match status" value="1"/>
</dbReference>
<dbReference type="FunFam" id="2.70.70.10:FF:000002">
    <property type="entry name" value="Murein DD-endopeptidase MepM"/>
    <property type="match status" value="1"/>
</dbReference>
<dbReference type="Gene3D" id="3.10.450.350">
    <property type="match status" value="2"/>
</dbReference>
<dbReference type="Gene3D" id="2.70.70.10">
    <property type="entry name" value="Glucose Permease (Domain IIA)"/>
    <property type="match status" value="1"/>
</dbReference>
<dbReference type="InterPro" id="IPR050570">
    <property type="entry name" value="Cell_wall_metabolism_enzyme"/>
</dbReference>
<dbReference type="InterPro" id="IPR045834">
    <property type="entry name" value="Csd3_N2"/>
</dbReference>
<dbReference type="InterPro" id="IPR011055">
    <property type="entry name" value="Dup_hybrid_motif"/>
</dbReference>
<dbReference type="InterPro" id="IPR007340">
    <property type="entry name" value="LysM_Opacity-associatedA"/>
</dbReference>
<dbReference type="InterPro" id="IPR016047">
    <property type="entry name" value="Peptidase_M23"/>
</dbReference>
<dbReference type="NCBIfam" id="NF008652">
    <property type="entry name" value="PRK11649.1"/>
    <property type="match status" value="1"/>
</dbReference>
<dbReference type="PANTHER" id="PTHR21666:SF292">
    <property type="entry name" value="MUREIN DD-ENDOPEPTIDASE MEPM"/>
    <property type="match status" value="1"/>
</dbReference>
<dbReference type="PANTHER" id="PTHR21666">
    <property type="entry name" value="PEPTIDASE-RELATED"/>
    <property type="match status" value="1"/>
</dbReference>
<dbReference type="Pfam" id="PF19425">
    <property type="entry name" value="Csd3_N2"/>
    <property type="match status" value="1"/>
</dbReference>
<dbReference type="Pfam" id="PF04225">
    <property type="entry name" value="LysM_OapA"/>
    <property type="match status" value="1"/>
</dbReference>
<dbReference type="Pfam" id="PF01551">
    <property type="entry name" value="Peptidase_M23"/>
    <property type="match status" value="1"/>
</dbReference>
<dbReference type="SUPFAM" id="SSF51261">
    <property type="entry name" value="Duplicated hybrid motif"/>
    <property type="match status" value="1"/>
</dbReference>
<keyword id="KW-1003">Cell membrane</keyword>
<keyword id="KW-0378">Hydrolase</keyword>
<keyword id="KW-0472">Membrane</keyword>
<keyword id="KW-0479">Metal-binding</keyword>
<keyword id="KW-0482">Metalloprotease</keyword>
<keyword id="KW-0645">Protease</keyword>
<keyword id="KW-1185">Reference proteome</keyword>
<keyword id="KW-0812">Transmembrane</keyword>
<keyword id="KW-1133">Transmembrane helix</keyword>
<keyword id="KW-0862">Zinc</keyword>
<gene>
    <name type="ordered locus">HI_0409</name>
</gene>
<organism>
    <name type="scientific">Haemophilus influenzae (strain ATCC 51907 / DSM 11121 / KW20 / Rd)</name>
    <dbReference type="NCBI Taxonomy" id="71421"/>
    <lineage>
        <taxon>Bacteria</taxon>
        <taxon>Pseudomonadati</taxon>
        <taxon>Pseudomonadota</taxon>
        <taxon>Gammaproteobacteria</taxon>
        <taxon>Pasteurellales</taxon>
        <taxon>Pasteurellaceae</taxon>
        <taxon>Haemophilus</taxon>
    </lineage>
</organism>
<accession>P44693</accession>
<feature type="chain" id="PRO_0000165905" description="Uncharacterized metalloprotease HI_0409">
    <location>
        <begin position="1"/>
        <end position="475"/>
    </location>
</feature>
<feature type="transmembrane region" description="Helical" evidence="1">
    <location>
        <begin position="19"/>
        <end position="39"/>
    </location>
</feature>
<feature type="region of interest" description="Disordered" evidence="2">
    <location>
        <begin position="55"/>
        <end position="79"/>
    </location>
</feature>
<feature type="region of interest" description="Disordered" evidence="2">
    <location>
        <begin position="330"/>
        <end position="350"/>
    </location>
</feature>
<feature type="compositionally biased region" description="Polar residues" evidence="2">
    <location>
        <begin position="60"/>
        <end position="79"/>
    </location>
</feature>
<feature type="compositionally biased region" description="Basic residues" evidence="2">
    <location>
        <begin position="336"/>
        <end position="348"/>
    </location>
</feature>
<feature type="binding site" evidence="1">
    <location>
        <position position="348"/>
    </location>
    <ligand>
        <name>Zn(2+)</name>
        <dbReference type="ChEBI" id="CHEBI:29105"/>
    </ligand>
</feature>
<protein>
    <recommendedName>
        <fullName>Uncharacterized metalloprotease HI_0409</fullName>
        <ecNumber>3.4.24.-</ecNumber>
    </recommendedName>
</protein>
<proteinExistence type="inferred from homology"/>
<comment type="cofactor">
    <cofactor evidence="3">
        <name>Zn(2+)</name>
        <dbReference type="ChEBI" id="CHEBI:29105"/>
    </cofactor>
</comment>
<comment type="subcellular location">
    <subcellularLocation>
        <location evidence="3">Cell membrane</location>
        <topology evidence="3">Single-pass membrane protein</topology>
    </subcellularLocation>
</comment>
<comment type="similarity">
    <text evidence="3">In the central section; belongs to the OapA family.</text>
</comment>
<comment type="similarity">
    <text evidence="3">In the C-terminal section; belongs to the peptidase M23B family.</text>
</comment>
<sequence length="475" mass="53255">MPVQHVKLARDRRKKRAYIKVGVFFVAILLILTGILLTIKSKPEENSIFSTFDSGEYHELNTSPNENSTALQPDENATSYDDELQAKDDEVDEVKLSSDDLDTLPQHAQDALNGLLDAADQAIRITDQFSYTVTEGDTLKDVLVLSGLDDSSVQPLIALDPELAHLKAGQQFYWILDKNDNLEYLNWLVSEKEERIYERLEDGKFKRQVIEKKSIWRKEVLKGEIQNSLNSSLREKGLDTRQISQLSNALQWQVSLRKLKKGTQFAILVSREYLGDKLTGQGNVEALRISSGGKNYYAVQAANGRYYNQQGETLGKGFARYPLQRQARVSSPFNPNRRHPVTGRIRPHKGVDFSVSQGTPVIAPADGTVEKVAYQAGGAGRYVMLRHGREYQTVYMHLSKSLVKAGQTVKKGERIALSGNTGISTGPHLHYEFHINGRAVNPLTVKLPGTSSGMTSAERKQFLVRVREAERMLKP</sequence>
<name>Y409_HAEIN</name>